<name>OTC2_PSESF</name>
<organism>
    <name type="scientific">Pseudomonas syringae pv. actinidiae</name>
    <dbReference type="NCBI Taxonomy" id="103796"/>
    <lineage>
        <taxon>Bacteria</taxon>
        <taxon>Pseudomonadati</taxon>
        <taxon>Pseudomonadota</taxon>
        <taxon>Gammaproteobacteria</taxon>
        <taxon>Pseudomonadales</taxon>
        <taxon>Pseudomonadaceae</taxon>
        <taxon>Pseudomonas</taxon>
        <taxon>Pseudomonas syringae</taxon>
    </lineage>
</organism>
<dbReference type="EC" id="2.1.3.3"/>
<dbReference type="EMBL" id="D86356">
    <property type="protein sequence ID" value="BAA19878.1"/>
    <property type="molecule type" value="Genomic_DNA"/>
</dbReference>
<dbReference type="SMR" id="P68746"/>
<dbReference type="UniPathway" id="UPA00068">
    <property type="reaction ID" value="UER00112"/>
</dbReference>
<dbReference type="GO" id="GO:0005737">
    <property type="term" value="C:cytoplasm"/>
    <property type="evidence" value="ECO:0007669"/>
    <property type="project" value="UniProtKB-UniRule"/>
</dbReference>
<dbReference type="GO" id="GO:0016597">
    <property type="term" value="F:amino acid binding"/>
    <property type="evidence" value="ECO:0007669"/>
    <property type="project" value="InterPro"/>
</dbReference>
<dbReference type="GO" id="GO:0004585">
    <property type="term" value="F:ornithine carbamoyltransferase activity"/>
    <property type="evidence" value="ECO:0007669"/>
    <property type="project" value="UniProtKB-UniRule"/>
</dbReference>
<dbReference type="GO" id="GO:0042450">
    <property type="term" value="P:arginine biosynthetic process via ornithine"/>
    <property type="evidence" value="ECO:0007669"/>
    <property type="project" value="TreeGrafter"/>
</dbReference>
<dbReference type="GO" id="GO:0019240">
    <property type="term" value="P:citrulline biosynthetic process"/>
    <property type="evidence" value="ECO:0007669"/>
    <property type="project" value="TreeGrafter"/>
</dbReference>
<dbReference type="GO" id="GO:0006526">
    <property type="term" value="P:L-arginine biosynthetic process"/>
    <property type="evidence" value="ECO:0007669"/>
    <property type="project" value="UniProtKB-UniPathway"/>
</dbReference>
<dbReference type="FunFam" id="3.40.50.1370:FF:000008">
    <property type="entry name" value="Ornithine carbamoyltransferase"/>
    <property type="match status" value="1"/>
</dbReference>
<dbReference type="Gene3D" id="3.40.50.1370">
    <property type="entry name" value="Aspartate/ornithine carbamoyltransferase"/>
    <property type="match status" value="2"/>
</dbReference>
<dbReference type="HAMAP" id="MF_01109">
    <property type="entry name" value="OTCase"/>
    <property type="match status" value="1"/>
</dbReference>
<dbReference type="InterPro" id="IPR006132">
    <property type="entry name" value="Asp/Orn_carbamoyltranf_P-bd"/>
</dbReference>
<dbReference type="InterPro" id="IPR006130">
    <property type="entry name" value="Asp/Orn_carbamoylTrfase"/>
</dbReference>
<dbReference type="InterPro" id="IPR036901">
    <property type="entry name" value="Asp/Orn_carbamoylTrfase_sf"/>
</dbReference>
<dbReference type="InterPro" id="IPR006131">
    <property type="entry name" value="Asp_carbamoyltransf_Asp/Orn-bd"/>
</dbReference>
<dbReference type="InterPro" id="IPR002292">
    <property type="entry name" value="Orn/put_carbamltrans"/>
</dbReference>
<dbReference type="InterPro" id="IPR024904">
    <property type="entry name" value="OTCase_ArgI"/>
</dbReference>
<dbReference type="NCBIfam" id="TIGR00658">
    <property type="entry name" value="orni_carb_tr"/>
    <property type="match status" value="1"/>
</dbReference>
<dbReference type="PANTHER" id="PTHR45753:SF2">
    <property type="entry name" value="ORNITHINE CARBAMOYLTRANSFERASE"/>
    <property type="match status" value="1"/>
</dbReference>
<dbReference type="PANTHER" id="PTHR45753">
    <property type="entry name" value="ORNITHINE CARBAMOYLTRANSFERASE, MITOCHONDRIAL"/>
    <property type="match status" value="1"/>
</dbReference>
<dbReference type="Pfam" id="PF00185">
    <property type="entry name" value="OTCace"/>
    <property type="match status" value="1"/>
</dbReference>
<dbReference type="Pfam" id="PF02729">
    <property type="entry name" value="OTCace_N"/>
    <property type="match status" value="1"/>
</dbReference>
<dbReference type="PRINTS" id="PR00100">
    <property type="entry name" value="AOTCASE"/>
</dbReference>
<dbReference type="PRINTS" id="PR00102">
    <property type="entry name" value="OTCASE"/>
</dbReference>
<dbReference type="SUPFAM" id="SSF53671">
    <property type="entry name" value="Aspartate/ornithine carbamoyltransferase"/>
    <property type="match status" value="1"/>
</dbReference>
<dbReference type="PROSITE" id="PS00097">
    <property type="entry name" value="CARBAMOYLTRANSFERASE"/>
    <property type="match status" value="1"/>
</dbReference>
<gene>
    <name type="primary">argK</name>
</gene>
<accession>P68746</accession>
<accession>P23752</accession>
<evidence type="ECO:0000250" key="1"/>
<evidence type="ECO:0000255" key="2">
    <source>
        <dbReference type="HAMAP-Rule" id="MF_01109"/>
    </source>
</evidence>
<evidence type="ECO:0000305" key="3"/>
<sequence length="327" mass="36562">MKITSLKNRNLLTMNEFNQSELSHLIDRAIECKRLKKDRIFNLGLNHLNICGIFLKPSGRTSTSFVVASYDEGAHFQFFPADNIRFGHKESIKDFARVVGRLFDGIAFRGFEHEVAEELAKHSGIPVWNALTDTHHPTQVLADVMTVKEEFGRIEGVTIAYVGDGRNNMVTSLAIGALKFGYNLRIIAPNALHPTDAVLAGIYEQTPERNGSIEIFTEVAAGVHQADVIYTDVWISMGESVSVEERIALLKPYKVTEKMMALTGKADTIFMHCLPAFHDLDTEVARETPDLVEVEDSVFEGPQSRVFDQGENRMHTIKALMLETVVP</sequence>
<proteinExistence type="inferred from homology"/>
<protein>
    <recommendedName>
        <fullName>Ornithine carbamoyltransferase 2, phaseolotoxin-insensitive</fullName>
        <shortName>OTCase 2</shortName>
        <ecNumber>2.1.3.3</ecNumber>
    </recommendedName>
    <alternativeName>
        <fullName>ROCT</fullName>
    </alternativeName>
</protein>
<reference key="1">
    <citation type="journal article" date="1997" name="Appl. Environ. Microbiol.">
        <title>Comparative analysis of Pseudomonas syringae pv. actinidiae and pv. phaseolicola based on phaseolotoxin-resistant ornithine carbamoyltransferase gene (argK) and 16S-23S rRNA intergenic spacer sequences.</title>
        <authorList>
            <person name="Sawada H."/>
            <person name="Takeuchi T."/>
            <person name="Matsuda I."/>
        </authorList>
    </citation>
    <scope>NUCLEOTIDE SEQUENCE [GENOMIC DNA]</scope>
    <source>
        <strain>KW-11</strain>
    </source>
</reference>
<feature type="initiator methionine" description="Removed" evidence="1">
    <location>
        <position position="1"/>
    </location>
</feature>
<feature type="chain" id="PRO_0000112993" description="Ornithine carbamoyltransferase 2, phaseolotoxin-insensitive">
    <location>
        <begin position="2"/>
        <end position="327"/>
    </location>
</feature>
<feature type="binding site" evidence="2">
    <location>
        <position position="109"/>
    </location>
    <ligand>
        <name>carbamoyl phosphate</name>
        <dbReference type="ChEBI" id="CHEBI:58228"/>
    </ligand>
</feature>
<feature type="binding site" evidence="2">
    <location>
        <begin position="136"/>
        <end position="139"/>
    </location>
    <ligand>
        <name>carbamoyl phosphate</name>
        <dbReference type="ChEBI" id="CHEBI:58228"/>
    </ligand>
</feature>
<feature type="binding site" evidence="2">
    <location>
        <position position="168"/>
    </location>
    <ligand>
        <name>L-ornithine</name>
        <dbReference type="ChEBI" id="CHEBI:46911"/>
    </ligand>
</feature>
<feature type="binding site" evidence="2">
    <location>
        <position position="232"/>
    </location>
    <ligand>
        <name>L-ornithine</name>
        <dbReference type="ChEBI" id="CHEBI:46911"/>
    </ligand>
</feature>
<feature type="binding site" evidence="2">
    <location>
        <begin position="236"/>
        <end position="237"/>
    </location>
    <ligand>
        <name>L-ornithine</name>
        <dbReference type="ChEBI" id="CHEBI:46911"/>
    </ligand>
</feature>
<feature type="binding site" evidence="2">
    <location>
        <begin position="273"/>
        <end position="274"/>
    </location>
    <ligand>
        <name>carbamoyl phosphate</name>
        <dbReference type="ChEBI" id="CHEBI:58228"/>
    </ligand>
</feature>
<feature type="binding site" evidence="2">
    <location>
        <position position="313"/>
    </location>
    <ligand>
        <name>carbamoyl phosphate</name>
        <dbReference type="ChEBI" id="CHEBI:58228"/>
    </ligand>
</feature>
<keyword id="KW-0028">Amino-acid biosynthesis</keyword>
<keyword id="KW-0055">Arginine biosynthesis</keyword>
<keyword id="KW-0808">Transferase</keyword>
<comment type="function">
    <text evidence="1">Plays an important role in the survival and pathogenicity of P.syringae. Phaseolotoxin is a virulence factor that inhibits the catalysis of the host OTCase. Phaseolotoxin-producing bacteria do not suffer autointoxication because they possess the anabolic OTCase ArgK which can function even in the presence of phaseolotoxin (By similarity).</text>
</comment>
<comment type="function">
    <text evidence="1">Reversibly catalyzes the transfer of the carbamoyl group from carbamoyl phosphate (CP) to the N(epsilon) atom of ornithine (ORN) to produce L-citrulline.</text>
</comment>
<comment type="catalytic activity">
    <reaction>
        <text>carbamoyl phosphate + L-ornithine = L-citrulline + phosphate + H(+)</text>
        <dbReference type="Rhea" id="RHEA:19513"/>
        <dbReference type="ChEBI" id="CHEBI:15378"/>
        <dbReference type="ChEBI" id="CHEBI:43474"/>
        <dbReference type="ChEBI" id="CHEBI:46911"/>
        <dbReference type="ChEBI" id="CHEBI:57743"/>
        <dbReference type="ChEBI" id="CHEBI:58228"/>
        <dbReference type="EC" id="2.1.3.3"/>
    </reaction>
</comment>
<comment type="pathway">
    <text>Amino-acid biosynthesis; L-arginine biosynthesis; L-arginine from L-ornithine and carbamoyl phosphate: step 1/3.</text>
</comment>
<comment type="miscellaneous">
    <text>This enzyme is insensitive to phaseolotoxin, a potent inhibitor of OTCase.</text>
</comment>
<comment type="similarity">
    <text evidence="3">Belongs to the aspartate/ornithine carbamoyltransferase superfamily. OTCase family.</text>
</comment>
<comment type="caution">
    <text evidence="3">Lacks the conserved threonine residue in position 60, which is part of the carbamoylphosphate binding site; it is replaced by a glycine residue.</text>
</comment>